<proteinExistence type="inferred from homology"/>
<name>CSD_MYCTO</name>
<evidence type="ECO:0000250" key="1"/>
<evidence type="ECO:0000305" key="2"/>
<feature type="chain" id="PRO_0000426828" description="Probable cysteine desulfurase">
    <location>
        <begin position="1"/>
        <end position="417"/>
    </location>
</feature>
<feature type="active site" description="Cysteine persulfide intermediate" evidence="1">
    <location>
        <position position="373"/>
    </location>
</feature>
<feature type="modified residue" description="N6-(pyridoxal phosphate)lysine" evidence="1">
    <location>
        <position position="233"/>
    </location>
</feature>
<gene>
    <name type="primary">csd</name>
    <name type="ordered locus">MT1511</name>
</gene>
<dbReference type="EC" id="2.8.1.7"/>
<dbReference type="EMBL" id="AE000516">
    <property type="protein sequence ID" value="AAK45775.1"/>
    <property type="molecule type" value="Genomic_DNA"/>
</dbReference>
<dbReference type="PIR" id="C70872">
    <property type="entry name" value="C70872"/>
</dbReference>
<dbReference type="RefSeq" id="WP_003407490.1">
    <property type="nucleotide sequence ID" value="NZ_KK341227.1"/>
</dbReference>
<dbReference type="SMR" id="P9WQ68"/>
<dbReference type="KEGG" id="mtc:MT1511"/>
<dbReference type="PATRIC" id="fig|83331.31.peg.1625"/>
<dbReference type="HOGENOM" id="CLU_003433_2_5_11"/>
<dbReference type="Proteomes" id="UP000001020">
    <property type="component" value="Chromosome"/>
</dbReference>
<dbReference type="GO" id="GO:0031071">
    <property type="term" value="F:cysteine desulfurase activity"/>
    <property type="evidence" value="ECO:0007669"/>
    <property type="project" value="UniProtKB-EC"/>
</dbReference>
<dbReference type="GO" id="GO:0030170">
    <property type="term" value="F:pyridoxal phosphate binding"/>
    <property type="evidence" value="ECO:0007669"/>
    <property type="project" value="InterPro"/>
</dbReference>
<dbReference type="GO" id="GO:0006534">
    <property type="term" value="P:cysteine metabolic process"/>
    <property type="evidence" value="ECO:0007669"/>
    <property type="project" value="InterPro"/>
</dbReference>
<dbReference type="CDD" id="cd06453">
    <property type="entry name" value="SufS_like"/>
    <property type="match status" value="1"/>
</dbReference>
<dbReference type="FunFam" id="3.40.640.10:FF:000112">
    <property type="entry name" value="Probable cysteine desulfurase"/>
    <property type="match status" value="1"/>
</dbReference>
<dbReference type="Gene3D" id="3.90.1150.10">
    <property type="entry name" value="Aspartate Aminotransferase, domain 1"/>
    <property type="match status" value="1"/>
</dbReference>
<dbReference type="Gene3D" id="3.40.640.10">
    <property type="entry name" value="Type I PLP-dependent aspartate aminotransferase-like (Major domain)"/>
    <property type="match status" value="1"/>
</dbReference>
<dbReference type="InterPro" id="IPR000192">
    <property type="entry name" value="Aminotrans_V_dom"/>
</dbReference>
<dbReference type="InterPro" id="IPR020578">
    <property type="entry name" value="Aminotrans_V_PyrdxlP_BS"/>
</dbReference>
<dbReference type="InterPro" id="IPR010970">
    <property type="entry name" value="Cys_dSase_SufS"/>
</dbReference>
<dbReference type="InterPro" id="IPR015424">
    <property type="entry name" value="PyrdxlP-dep_Trfase"/>
</dbReference>
<dbReference type="InterPro" id="IPR015421">
    <property type="entry name" value="PyrdxlP-dep_Trfase_major"/>
</dbReference>
<dbReference type="InterPro" id="IPR015422">
    <property type="entry name" value="PyrdxlP-dep_Trfase_small"/>
</dbReference>
<dbReference type="NCBIfam" id="TIGR01979">
    <property type="entry name" value="sufS"/>
    <property type="match status" value="1"/>
</dbReference>
<dbReference type="PANTHER" id="PTHR43586">
    <property type="entry name" value="CYSTEINE DESULFURASE"/>
    <property type="match status" value="1"/>
</dbReference>
<dbReference type="PANTHER" id="PTHR43586:SF8">
    <property type="entry name" value="CYSTEINE DESULFURASE 1, CHLOROPLASTIC"/>
    <property type="match status" value="1"/>
</dbReference>
<dbReference type="Pfam" id="PF00266">
    <property type="entry name" value="Aminotran_5"/>
    <property type="match status" value="1"/>
</dbReference>
<dbReference type="SUPFAM" id="SSF53383">
    <property type="entry name" value="PLP-dependent transferases"/>
    <property type="match status" value="1"/>
</dbReference>
<dbReference type="PROSITE" id="PS00595">
    <property type="entry name" value="AA_TRANSFER_CLASS_5"/>
    <property type="match status" value="1"/>
</dbReference>
<keyword id="KW-0663">Pyridoxal phosphate</keyword>
<keyword id="KW-1185">Reference proteome</keyword>
<keyword id="KW-0808">Transferase</keyword>
<reference key="1">
    <citation type="journal article" date="2002" name="J. Bacteriol.">
        <title>Whole-genome comparison of Mycobacterium tuberculosis clinical and laboratory strains.</title>
        <authorList>
            <person name="Fleischmann R.D."/>
            <person name="Alland D."/>
            <person name="Eisen J.A."/>
            <person name="Carpenter L."/>
            <person name="White O."/>
            <person name="Peterson J.D."/>
            <person name="DeBoy R.T."/>
            <person name="Dodson R.J."/>
            <person name="Gwinn M.L."/>
            <person name="Haft D.H."/>
            <person name="Hickey E.K."/>
            <person name="Kolonay J.F."/>
            <person name="Nelson W.C."/>
            <person name="Umayam L.A."/>
            <person name="Ermolaeva M.D."/>
            <person name="Salzberg S.L."/>
            <person name="Delcher A."/>
            <person name="Utterback T.R."/>
            <person name="Weidman J.F."/>
            <person name="Khouri H.M."/>
            <person name="Gill J."/>
            <person name="Mikula A."/>
            <person name="Bishai W."/>
            <person name="Jacobs W.R. Jr."/>
            <person name="Venter J.C."/>
            <person name="Fraser C.M."/>
        </authorList>
    </citation>
    <scope>NUCLEOTIDE SEQUENCE [LARGE SCALE GENOMIC DNA]</scope>
    <source>
        <strain>CDC 1551 / Oshkosh</strain>
    </source>
</reference>
<comment type="function">
    <text evidence="1">Catalyzes the removal of elemental sulfur and selenium atoms from L-cysteine, L-cystine, L-selenocysteine, and L-selenocystine to produce L-alanine.</text>
</comment>
<comment type="catalytic activity">
    <reaction>
        <text>(sulfur carrier)-H + L-cysteine = (sulfur carrier)-SH + L-alanine</text>
        <dbReference type="Rhea" id="RHEA:43892"/>
        <dbReference type="Rhea" id="RHEA-COMP:14737"/>
        <dbReference type="Rhea" id="RHEA-COMP:14739"/>
        <dbReference type="ChEBI" id="CHEBI:29917"/>
        <dbReference type="ChEBI" id="CHEBI:35235"/>
        <dbReference type="ChEBI" id="CHEBI:57972"/>
        <dbReference type="ChEBI" id="CHEBI:64428"/>
        <dbReference type="EC" id="2.8.1.7"/>
    </reaction>
</comment>
<comment type="cofactor">
    <cofactor evidence="1">
        <name>pyridoxal 5'-phosphate</name>
        <dbReference type="ChEBI" id="CHEBI:597326"/>
    </cofactor>
</comment>
<comment type="similarity">
    <text evidence="2">Belongs to the class-V pyridoxal-phosphate-dependent aminotransferase family. Csd subfamily.</text>
</comment>
<sequence length="417" mass="44596">MTASVNSLDLAAIRADFPILKRIMRGGNPLAYLDSGATSQRPLQVLDAEREFLTASNGAVHRGAHQLMEEATDAYEQGRADIALFVGADTDELVFTKNATEALNLVSYVLGDSRFERAVGPGDVIVTTELEHHANLIPWQELARRTGATLRWYGVTDDGRIDLDSLYLDDRVKVVAFTHHSNVTGVLTPVSELVSRAHQSGALTVLDACQSVPHQPVDLHELGVDFAAFSGHKMLGPNGIGVLYGRRELLAQMPPFLTGGSMIETVTMEGATYAPAPQRFEAGTPMTSQVVGLAAAARYLGAIGMAAVEAHERELVAAAIEGLSGIDGVRILGPTSMRDRGSPVAFVVEGVHAHDVGQVLDDGGVAVRVGHHCALPLHRRFGLAATARASFAVYNTADEVDRLVAGVRRSRHFFGRA</sequence>
<accession>P9WQ68</accession>
<accession>L0T9P9</accession>
<accession>O53155</accession>
<accession>P63516</accession>
<protein>
    <recommendedName>
        <fullName>Probable cysteine desulfurase</fullName>
        <ecNumber>2.8.1.7</ecNumber>
    </recommendedName>
</protein>
<organism>
    <name type="scientific">Mycobacterium tuberculosis (strain CDC 1551 / Oshkosh)</name>
    <dbReference type="NCBI Taxonomy" id="83331"/>
    <lineage>
        <taxon>Bacteria</taxon>
        <taxon>Bacillati</taxon>
        <taxon>Actinomycetota</taxon>
        <taxon>Actinomycetes</taxon>
        <taxon>Mycobacteriales</taxon>
        <taxon>Mycobacteriaceae</taxon>
        <taxon>Mycobacterium</taxon>
        <taxon>Mycobacterium tuberculosis complex</taxon>
    </lineage>
</organism>